<feature type="chain" id="PRO_0000445754" description="Developmental regulatory protein wetA">
    <location>
        <begin position="1"/>
        <end position="645"/>
    </location>
</feature>
<feature type="region of interest" description="Disordered" evidence="1">
    <location>
        <begin position="158"/>
        <end position="187"/>
    </location>
</feature>
<feature type="region of interest" description="Disordered" evidence="1">
    <location>
        <begin position="201"/>
        <end position="249"/>
    </location>
</feature>
<feature type="region of interest" description="Disordered" evidence="1">
    <location>
        <begin position="284"/>
        <end position="376"/>
    </location>
</feature>
<feature type="region of interest" description="Disordered" evidence="1">
    <location>
        <begin position="461"/>
        <end position="578"/>
    </location>
</feature>
<feature type="region of interest" description="Disordered" evidence="1">
    <location>
        <begin position="596"/>
        <end position="618"/>
    </location>
</feature>
<feature type="compositionally biased region" description="Polar residues" evidence="1">
    <location>
        <begin position="240"/>
        <end position="249"/>
    </location>
</feature>
<feature type="compositionally biased region" description="Basic residues" evidence="1">
    <location>
        <begin position="315"/>
        <end position="326"/>
    </location>
</feature>
<feature type="compositionally biased region" description="Basic residues" evidence="1">
    <location>
        <begin position="351"/>
        <end position="361"/>
    </location>
</feature>
<feature type="compositionally biased region" description="Low complexity" evidence="1">
    <location>
        <begin position="362"/>
        <end position="373"/>
    </location>
</feature>
<feature type="compositionally biased region" description="Polar residues" evidence="1">
    <location>
        <begin position="509"/>
        <end position="518"/>
    </location>
</feature>
<feature type="compositionally biased region" description="Low complexity" evidence="1">
    <location>
        <begin position="528"/>
        <end position="546"/>
    </location>
</feature>
<feature type="compositionally biased region" description="Polar residues" evidence="1">
    <location>
        <begin position="562"/>
        <end position="572"/>
    </location>
</feature>
<comment type="function">
    <text evidence="2">BrlA, abaA and wetA are pivotal regulators of conidiophore development and conidium maturation. They act individually and together to regulate their own expression and that of numerous other sporulation-specific genes (PubMed:28447400). BrlA, abaA and wetA act together to positively regulate the expression of the Pks1 gene cluster that mediates the biosynthesis of an anthraquinone derivative pigment that contributes to conidial pigmentation that provides protection from UV radiation, heat and cold stress (PubMed:28447400).</text>
</comment>
<comment type="induction">
    <text evidence="2">Expression remains constant during conidiation (PubMed:28447400). Expression is positively regulated by BrlA and AbaA (PubMed:28447400).</text>
</comment>
<comment type="disruption phenotype">
    <text evidence="2">Produces fewer branches per conidiophore and thus has significantly lower conidial yields.</text>
</comment>
<comment type="similarity">
    <text evidence="4">Belongs to the wetA family.</text>
</comment>
<reference key="1">
    <citation type="journal article" date="2011" name="PLoS Genet.">
        <title>Genome sequencing and comparative transcriptomics of the model entomopathogenic fungi Metarhizium anisopliae and M. acridum.</title>
        <authorList>
            <person name="Gao Q."/>
            <person name="Jin K."/>
            <person name="Ying S.-H."/>
            <person name="Zhang Y."/>
            <person name="Xiao G."/>
            <person name="Shang Y."/>
            <person name="Duan Z."/>
            <person name="Hu X."/>
            <person name="Xie X.-Q."/>
            <person name="Zhou G."/>
            <person name="Peng G."/>
            <person name="Luo Z."/>
            <person name="Huang W."/>
            <person name="Wang B."/>
            <person name="Fang W."/>
            <person name="Wang S."/>
            <person name="Zhong Y."/>
            <person name="Ma L.-J."/>
            <person name="St Leger R.J."/>
            <person name="Zhao G.-P."/>
            <person name="Pei Y."/>
            <person name="Feng M.-G."/>
            <person name="Xia Y."/>
            <person name="Wang C."/>
        </authorList>
    </citation>
    <scope>NUCLEOTIDE SEQUENCE [LARGE SCALE GENOMIC DNA]</scope>
    <source>
        <strain>ARSEF 23 / ATCC MYA-3075</strain>
    </source>
</reference>
<reference key="2">
    <citation type="journal article" date="2014" name="Proc. Natl. Acad. Sci. U.S.A.">
        <title>Trajectory and genomic determinants of fungal-pathogen speciation and host adaptation.</title>
        <authorList>
            <person name="Hu X."/>
            <person name="Xiao G."/>
            <person name="Zheng P."/>
            <person name="Shang Y."/>
            <person name="Su Y."/>
            <person name="Zhang X."/>
            <person name="Liu X."/>
            <person name="Zhan S."/>
            <person name="St Leger R.J."/>
            <person name="Wang C."/>
        </authorList>
    </citation>
    <scope>GENOME REANNOTATION</scope>
    <source>
        <strain>ARSEF 23 / ATCC MYA-3075</strain>
    </source>
</reference>
<reference key="3">
    <citation type="journal article" date="2017" name="Environ. Microbiol.">
        <title>Genome-wide identification of pathogenicity, conidiation and colony sectorization genes in Metarhizium robertsii.</title>
        <authorList>
            <person name="Zeng G."/>
            <person name="Chen X."/>
            <person name="Zhang X."/>
            <person name="Zhang Q."/>
            <person name="Xu C."/>
            <person name="Mi W."/>
            <person name="Guo N."/>
            <person name="Zhao H."/>
            <person name="You Y."/>
            <person name="Dryburgh F.J."/>
            <person name="Bidochka M.J."/>
            <person name="St Leger R.J."/>
            <person name="Zhang L."/>
            <person name="Fang W."/>
        </authorList>
    </citation>
    <scope>IDENTIFICATION</scope>
    <scope>FUNCTION</scope>
    <scope>INDUCTION</scope>
    <scope>DISRUPTION PHENOTYPE</scope>
</reference>
<evidence type="ECO:0000256" key="1">
    <source>
        <dbReference type="SAM" id="MobiDB-lite"/>
    </source>
</evidence>
<evidence type="ECO:0000269" key="2">
    <source>
    </source>
</evidence>
<evidence type="ECO:0000303" key="3">
    <source>
    </source>
</evidence>
<evidence type="ECO:0000305" key="4"/>
<protein>
    <recommendedName>
        <fullName evidence="3">Developmental regulatory protein wetA</fullName>
    </recommendedName>
</protein>
<dbReference type="EMBL" id="ADNJ02000004">
    <property type="protein sequence ID" value="EFZ01616.1"/>
    <property type="molecule type" value="Genomic_DNA"/>
</dbReference>
<dbReference type="RefSeq" id="XP_007819034.1">
    <property type="nucleotide sequence ID" value="XM_007820843.1"/>
</dbReference>
<dbReference type="GeneID" id="19257131"/>
<dbReference type="KEGG" id="maj:MAA_02845"/>
<dbReference type="HOGENOM" id="CLU_020420_0_0_1"/>
<dbReference type="OrthoDB" id="2575228at2759"/>
<dbReference type="Proteomes" id="UP000002498">
    <property type="component" value="Unassembled WGS sequence"/>
</dbReference>
<dbReference type="GO" id="GO:0048315">
    <property type="term" value="P:conidium formation"/>
    <property type="evidence" value="ECO:0007669"/>
    <property type="project" value="UniProtKB-KW"/>
</dbReference>
<dbReference type="GO" id="GO:0030435">
    <property type="term" value="P:sporulation resulting in formation of a cellular spore"/>
    <property type="evidence" value="ECO:0007669"/>
    <property type="project" value="UniProtKB-KW"/>
</dbReference>
<name>WETA_METRA</name>
<keyword id="KW-0010">Activator</keyword>
<keyword id="KW-0183">Conidiation</keyword>
<keyword id="KW-0749">Sporulation</keyword>
<keyword id="KW-0804">Transcription</keyword>
<keyword id="KW-0805">Transcription regulation</keyword>
<organism>
    <name type="scientific">Metarhizium robertsii (strain ARSEF 23 / ATCC MYA-3075)</name>
    <name type="common">Metarhizium anisopliae (strain ARSEF 23)</name>
    <dbReference type="NCBI Taxonomy" id="655844"/>
    <lineage>
        <taxon>Eukaryota</taxon>
        <taxon>Fungi</taxon>
        <taxon>Dikarya</taxon>
        <taxon>Ascomycota</taxon>
        <taxon>Pezizomycotina</taxon>
        <taxon>Sordariomycetes</taxon>
        <taxon>Hypocreomycetidae</taxon>
        <taxon>Hypocreales</taxon>
        <taxon>Clavicipitaceae</taxon>
        <taxon>Metarhizium</taxon>
    </lineage>
</organism>
<gene>
    <name evidence="3" type="primary">WetA</name>
    <name type="ORF">MAA_02845</name>
</gene>
<sequence length="645" mass="70348">MAFWTVPYRAEAVDTNRDPSMYWEDINSASTDDAHNDFFGQFVDFDADGTVTATTDNDFNTVPASMPGVPESMLLMGDRTVATLESAVSSCVSSADEFDFLSSSSRIGPTASAASHEIDPKDLTLSADELAHPSQQQFDYLGRGSMSEADLSRLESISLHSPQRPQNTTSSDTPSPKPPNTDARKPKKFVEALSSTIRKATNLRRNRKAAAVPRQVSPPQEHLQPLKIPKQRRGRGRAVTQGNLPVSPPLQQQEQATPHFIHGQCDDPFNDTALLPPGGVNLQYYGQVAPDTPVESPGVKNEPNQSHFQVDMAWQHHHHPHHHHQQQQHPPPPPHPHPHPHHHQQQQQQHQHQHQHHHQQQQHHQQQQQQQHQMHWTGTGGEYITSQEAGWWTPNMMSQGPNDFSHHQRSASVHVMGHGQHTGMPYDYGAIADTSTGGLMIHMPQPRGSQSSVVNDLTVNAQTFLPPPPPIPQAIGQKMPGSERSHRPPKAKSSGARHLSCSPVRKQRGPSSSPTPADQSAVPRSRHSSGASVSSLRSSSGRLPASMPGTPCSVRKRRSRDISGSNSATSLGGSDGASGIGFVNFTPNDGSVLMTGVAPSGSSKTKARREKEAQDRRRRLSEAAIKAVAAAGGDVDKLIEQGFAF</sequence>
<proteinExistence type="evidence at transcript level"/>
<accession>E9ES99</accession>